<protein>
    <recommendedName>
        <fullName evidence="1">NADH-quinone oxidoreductase subunit A</fullName>
        <ecNumber evidence="1">7.1.1.-</ecNumber>
    </recommendedName>
    <alternativeName>
        <fullName evidence="1">NADH dehydrogenase I subunit A</fullName>
    </alternativeName>
    <alternativeName>
        <fullName evidence="1">NDH-1 subunit A</fullName>
    </alternativeName>
    <alternativeName>
        <fullName evidence="1">NUO1</fullName>
    </alternativeName>
</protein>
<reference key="1">
    <citation type="submission" date="2007-03" db="EMBL/GenBank/DDBJ databases">
        <title>Complete sequence of Prosthecochloris vibrioformis DSM 265.</title>
        <authorList>
            <consortium name="US DOE Joint Genome Institute"/>
            <person name="Copeland A."/>
            <person name="Lucas S."/>
            <person name="Lapidus A."/>
            <person name="Barry K."/>
            <person name="Detter J.C."/>
            <person name="Glavina del Rio T."/>
            <person name="Hammon N."/>
            <person name="Israni S."/>
            <person name="Pitluck S."/>
            <person name="Schmutz J."/>
            <person name="Larimer F."/>
            <person name="Land M."/>
            <person name="Hauser L."/>
            <person name="Mikhailova N."/>
            <person name="Li T."/>
            <person name="Overmann J."/>
            <person name="Schuster S.C."/>
            <person name="Bryant D.A."/>
            <person name="Richardson P."/>
        </authorList>
    </citation>
    <scope>NUCLEOTIDE SEQUENCE [LARGE SCALE GENOMIC DNA]</scope>
    <source>
        <strain>DSM 265 / 1930</strain>
    </source>
</reference>
<proteinExistence type="inferred from homology"/>
<accession>A4SF48</accession>
<organism>
    <name type="scientific">Chlorobium phaeovibrioides (strain DSM 265 / 1930)</name>
    <name type="common">Prosthecochloris vibrioformis (strain DSM 265)</name>
    <dbReference type="NCBI Taxonomy" id="290318"/>
    <lineage>
        <taxon>Bacteria</taxon>
        <taxon>Pseudomonadati</taxon>
        <taxon>Chlorobiota</taxon>
        <taxon>Chlorobiia</taxon>
        <taxon>Chlorobiales</taxon>
        <taxon>Chlorobiaceae</taxon>
        <taxon>Chlorobium/Pelodictyon group</taxon>
        <taxon>Chlorobium</taxon>
    </lineage>
</organism>
<evidence type="ECO:0000255" key="1">
    <source>
        <dbReference type="HAMAP-Rule" id="MF_01394"/>
    </source>
</evidence>
<gene>
    <name evidence="1" type="primary">nuoA</name>
    <name type="ordered locus">Cvib_1093</name>
</gene>
<comment type="function">
    <text evidence="1">NDH-1 shuttles electrons from NADH, via FMN and iron-sulfur (Fe-S) centers, to quinones in the respiratory chain. The immediate electron acceptor for the enzyme in this species is believed to be a menaquinone. Couples the redox reaction to proton translocation (for every two electrons transferred, four hydrogen ions are translocated across the cytoplasmic membrane), and thus conserves the redox energy in a proton gradient.</text>
</comment>
<comment type="catalytic activity">
    <reaction evidence="1">
        <text>a quinone + NADH + 5 H(+)(in) = a quinol + NAD(+) + 4 H(+)(out)</text>
        <dbReference type="Rhea" id="RHEA:57888"/>
        <dbReference type="ChEBI" id="CHEBI:15378"/>
        <dbReference type="ChEBI" id="CHEBI:24646"/>
        <dbReference type="ChEBI" id="CHEBI:57540"/>
        <dbReference type="ChEBI" id="CHEBI:57945"/>
        <dbReference type="ChEBI" id="CHEBI:132124"/>
    </reaction>
</comment>
<comment type="subunit">
    <text evidence="1">NDH-1 is composed of 14 different subunits. Subunits NuoA, H, J, K, L, M, N constitute the membrane sector of the complex.</text>
</comment>
<comment type="subcellular location">
    <subcellularLocation>
        <location evidence="1">Cell inner membrane</location>
        <topology evidence="1">Multi-pass membrane protein</topology>
    </subcellularLocation>
</comment>
<comment type="similarity">
    <text evidence="1">Belongs to the complex I subunit 3 family.</text>
</comment>
<name>NUOA_CHLPM</name>
<feature type="chain" id="PRO_0000362731" description="NADH-quinone oxidoreductase subunit A">
    <location>
        <begin position="1"/>
        <end position="143"/>
    </location>
</feature>
<feature type="transmembrane region" description="Helical" evidence="1">
    <location>
        <begin position="8"/>
        <end position="28"/>
    </location>
</feature>
<feature type="transmembrane region" description="Helical" evidence="1">
    <location>
        <begin position="63"/>
        <end position="83"/>
    </location>
</feature>
<feature type="transmembrane region" description="Helical" evidence="1">
    <location>
        <begin position="93"/>
        <end position="113"/>
    </location>
</feature>
<keyword id="KW-0997">Cell inner membrane</keyword>
<keyword id="KW-1003">Cell membrane</keyword>
<keyword id="KW-0472">Membrane</keyword>
<keyword id="KW-0520">NAD</keyword>
<keyword id="KW-0874">Quinone</keyword>
<keyword id="KW-1278">Translocase</keyword>
<keyword id="KW-0812">Transmembrane</keyword>
<keyword id="KW-1133">Transmembrane helix</keyword>
<keyword id="KW-0813">Transport</keyword>
<sequence>MDQTLSEFGNVFVFFLLGVVFVAGGYLTARMLRPSRPNPVKTSTYECGEEAVGSAWVKFNIRFYVVALIFIIFDVEVVFLFPWATVFRQLGSFALVEALVFAGILILGLVYAWVKGDLDWVRPTPSVPKMPEMPASKSSSQRD</sequence>
<dbReference type="EC" id="7.1.1.-" evidence="1"/>
<dbReference type="EMBL" id="CP000607">
    <property type="protein sequence ID" value="ABP37107.1"/>
    <property type="molecule type" value="Genomic_DNA"/>
</dbReference>
<dbReference type="SMR" id="A4SF48"/>
<dbReference type="STRING" id="290318.Cvib_1093"/>
<dbReference type="KEGG" id="pvi:Cvib_1093"/>
<dbReference type="eggNOG" id="COG0838">
    <property type="taxonomic scope" value="Bacteria"/>
</dbReference>
<dbReference type="HOGENOM" id="CLU_119549_1_0_10"/>
<dbReference type="OrthoDB" id="9791970at2"/>
<dbReference type="GO" id="GO:0030964">
    <property type="term" value="C:NADH dehydrogenase complex"/>
    <property type="evidence" value="ECO:0007669"/>
    <property type="project" value="TreeGrafter"/>
</dbReference>
<dbReference type="GO" id="GO:0005886">
    <property type="term" value="C:plasma membrane"/>
    <property type="evidence" value="ECO:0007669"/>
    <property type="project" value="UniProtKB-SubCell"/>
</dbReference>
<dbReference type="GO" id="GO:0008137">
    <property type="term" value="F:NADH dehydrogenase (ubiquinone) activity"/>
    <property type="evidence" value="ECO:0007669"/>
    <property type="project" value="InterPro"/>
</dbReference>
<dbReference type="GO" id="GO:0050136">
    <property type="term" value="F:NADH:ubiquinone reductase (non-electrogenic) activity"/>
    <property type="evidence" value="ECO:0007669"/>
    <property type="project" value="UniProtKB-UniRule"/>
</dbReference>
<dbReference type="GO" id="GO:0048038">
    <property type="term" value="F:quinone binding"/>
    <property type="evidence" value="ECO:0007669"/>
    <property type="project" value="UniProtKB-KW"/>
</dbReference>
<dbReference type="Gene3D" id="1.20.58.1610">
    <property type="entry name" value="NADH:ubiquinone/plastoquinone oxidoreductase, chain 3"/>
    <property type="match status" value="1"/>
</dbReference>
<dbReference type="HAMAP" id="MF_01394">
    <property type="entry name" value="NDH1_NuoA"/>
    <property type="match status" value="1"/>
</dbReference>
<dbReference type="InterPro" id="IPR023043">
    <property type="entry name" value="NAD(P)H_OxRDtase_bac/plastid"/>
</dbReference>
<dbReference type="InterPro" id="IPR000440">
    <property type="entry name" value="NADH_UbQ/plastoQ_OxRdtase_su3"/>
</dbReference>
<dbReference type="InterPro" id="IPR038430">
    <property type="entry name" value="NDAH_ubi_oxred_su3_sf"/>
</dbReference>
<dbReference type="PANTHER" id="PTHR11058">
    <property type="entry name" value="NADH-UBIQUINONE OXIDOREDUCTASE CHAIN 3"/>
    <property type="match status" value="1"/>
</dbReference>
<dbReference type="PANTHER" id="PTHR11058:SF9">
    <property type="entry name" value="NADH-UBIQUINONE OXIDOREDUCTASE CHAIN 3"/>
    <property type="match status" value="1"/>
</dbReference>
<dbReference type="Pfam" id="PF00507">
    <property type="entry name" value="Oxidored_q4"/>
    <property type="match status" value="1"/>
</dbReference>